<evidence type="ECO:0000255" key="1">
    <source>
        <dbReference type="HAMAP-Rule" id="MF_01456"/>
    </source>
</evidence>
<organism>
    <name type="scientific">Leptospira biflexa serovar Patoc (strain Patoc 1 / ATCC 23582 / Paris)</name>
    <dbReference type="NCBI Taxonomy" id="456481"/>
    <lineage>
        <taxon>Bacteria</taxon>
        <taxon>Pseudomonadati</taxon>
        <taxon>Spirochaetota</taxon>
        <taxon>Spirochaetia</taxon>
        <taxon>Leptospirales</taxon>
        <taxon>Leptospiraceae</taxon>
        <taxon>Leptospira</taxon>
    </lineage>
</organism>
<comment type="function">
    <text evidence="1">NDH-1 shuttles electrons from NADH, via FMN and iron-sulfur (Fe-S) centers, to quinones in the respiratory chain. The immediate electron acceptor for the enzyme in this species is believed to be ubiquinone. Couples the redox reaction to proton translocation (for every two electrons transferred, four hydrogen ions are translocated across the cytoplasmic membrane), and thus conserves the redox energy in a proton gradient.</text>
</comment>
<comment type="catalytic activity">
    <reaction evidence="1">
        <text>a quinone + NADH + 5 H(+)(in) = a quinol + NAD(+) + 4 H(+)(out)</text>
        <dbReference type="Rhea" id="RHEA:57888"/>
        <dbReference type="ChEBI" id="CHEBI:15378"/>
        <dbReference type="ChEBI" id="CHEBI:24646"/>
        <dbReference type="ChEBI" id="CHEBI:57540"/>
        <dbReference type="ChEBI" id="CHEBI:57945"/>
        <dbReference type="ChEBI" id="CHEBI:132124"/>
    </reaction>
</comment>
<comment type="subunit">
    <text evidence="1">NDH-1 is composed of 14 different subunits. Subunits NuoA, H, J, K, L, M, N constitute the membrane sector of the complex.</text>
</comment>
<comment type="subcellular location">
    <subcellularLocation>
        <location evidence="1">Cell inner membrane</location>
        <topology evidence="1">Multi-pass membrane protein</topology>
    </subcellularLocation>
</comment>
<comment type="similarity">
    <text evidence="1">Belongs to the complex I subunit 4L family.</text>
</comment>
<proteinExistence type="inferred from homology"/>
<reference key="1">
    <citation type="journal article" date="2008" name="PLoS ONE">
        <title>Genome sequence of the saprophyte Leptospira biflexa provides insights into the evolution of Leptospira and the pathogenesis of leptospirosis.</title>
        <authorList>
            <person name="Picardeau M."/>
            <person name="Bulach D.M."/>
            <person name="Bouchier C."/>
            <person name="Zuerner R.L."/>
            <person name="Zidane N."/>
            <person name="Wilson P.J."/>
            <person name="Creno S."/>
            <person name="Kuczek E.S."/>
            <person name="Bommezzadri S."/>
            <person name="Davis J.C."/>
            <person name="McGrath A."/>
            <person name="Johnson M.J."/>
            <person name="Boursaux-Eude C."/>
            <person name="Seemann T."/>
            <person name="Rouy Z."/>
            <person name="Coppel R.L."/>
            <person name="Rood J.I."/>
            <person name="Lajus A."/>
            <person name="Davies J.K."/>
            <person name="Medigue C."/>
            <person name="Adler B."/>
        </authorList>
    </citation>
    <scope>NUCLEOTIDE SEQUENCE [LARGE SCALE GENOMIC DNA]</scope>
    <source>
        <strain>Patoc 1 / ATCC 23582 / Paris</strain>
    </source>
</reference>
<protein>
    <recommendedName>
        <fullName evidence="1">NADH-quinone oxidoreductase subunit K</fullName>
        <ecNumber evidence="1">7.1.1.-</ecNumber>
    </recommendedName>
    <alternativeName>
        <fullName evidence="1">NADH dehydrogenase I subunit K</fullName>
    </alternativeName>
    <alternativeName>
        <fullName evidence="1">NDH-1 subunit K</fullName>
    </alternativeName>
</protein>
<keyword id="KW-0997">Cell inner membrane</keyword>
<keyword id="KW-1003">Cell membrane</keyword>
<keyword id="KW-0472">Membrane</keyword>
<keyword id="KW-0520">NAD</keyword>
<keyword id="KW-0874">Quinone</keyword>
<keyword id="KW-1185">Reference proteome</keyword>
<keyword id="KW-1278">Translocase</keyword>
<keyword id="KW-0812">Transmembrane</keyword>
<keyword id="KW-1133">Transmembrane helix</keyword>
<keyword id="KW-0813">Transport</keyword>
<keyword id="KW-0830">Ubiquinone</keyword>
<dbReference type="EC" id="7.1.1.-" evidence="1"/>
<dbReference type="EMBL" id="CP000786">
    <property type="protein sequence ID" value="ABZ97414.1"/>
    <property type="molecule type" value="Genomic_DNA"/>
</dbReference>
<dbReference type="RefSeq" id="WP_012388295.1">
    <property type="nucleotide sequence ID" value="NC_010602.1"/>
</dbReference>
<dbReference type="SMR" id="B0SP90"/>
<dbReference type="STRING" id="456481.LEPBI_I1304"/>
<dbReference type="KEGG" id="lbi:LEPBI_I1304"/>
<dbReference type="HOGENOM" id="CLU_144724_0_0_12"/>
<dbReference type="OrthoDB" id="9810120at2"/>
<dbReference type="BioCyc" id="LBIF456481:LEPBI_RS06385-MONOMER"/>
<dbReference type="Proteomes" id="UP000001847">
    <property type="component" value="Chromosome I"/>
</dbReference>
<dbReference type="GO" id="GO:0030964">
    <property type="term" value="C:NADH dehydrogenase complex"/>
    <property type="evidence" value="ECO:0007669"/>
    <property type="project" value="TreeGrafter"/>
</dbReference>
<dbReference type="GO" id="GO:0005886">
    <property type="term" value="C:plasma membrane"/>
    <property type="evidence" value="ECO:0007669"/>
    <property type="project" value="UniProtKB-SubCell"/>
</dbReference>
<dbReference type="GO" id="GO:0050136">
    <property type="term" value="F:NADH:ubiquinone reductase (non-electrogenic) activity"/>
    <property type="evidence" value="ECO:0007669"/>
    <property type="project" value="UniProtKB-UniRule"/>
</dbReference>
<dbReference type="GO" id="GO:0048038">
    <property type="term" value="F:quinone binding"/>
    <property type="evidence" value="ECO:0007669"/>
    <property type="project" value="UniProtKB-KW"/>
</dbReference>
<dbReference type="GO" id="GO:0042773">
    <property type="term" value="P:ATP synthesis coupled electron transport"/>
    <property type="evidence" value="ECO:0007669"/>
    <property type="project" value="InterPro"/>
</dbReference>
<dbReference type="FunFam" id="1.10.287.3510:FF:000001">
    <property type="entry name" value="NADH-quinone oxidoreductase subunit K"/>
    <property type="match status" value="1"/>
</dbReference>
<dbReference type="Gene3D" id="1.10.287.3510">
    <property type="match status" value="1"/>
</dbReference>
<dbReference type="HAMAP" id="MF_01456">
    <property type="entry name" value="NDH1_NuoK"/>
    <property type="match status" value="1"/>
</dbReference>
<dbReference type="InterPro" id="IPR001133">
    <property type="entry name" value="NADH_UbQ_OxRdtase_chain4L/K"/>
</dbReference>
<dbReference type="InterPro" id="IPR039428">
    <property type="entry name" value="NUOK/Mnh_C1-like"/>
</dbReference>
<dbReference type="NCBIfam" id="NF004320">
    <property type="entry name" value="PRK05715.1-2"/>
    <property type="match status" value="1"/>
</dbReference>
<dbReference type="NCBIfam" id="NF004321">
    <property type="entry name" value="PRK05715.1-3"/>
    <property type="match status" value="1"/>
</dbReference>
<dbReference type="PANTHER" id="PTHR11434:SF21">
    <property type="entry name" value="NADH DEHYDROGENASE SUBUNIT 4L-RELATED"/>
    <property type="match status" value="1"/>
</dbReference>
<dbReference type="PANTHER" id="PTHR11434">
    <property type="entry name" value="NADH-UBIQUINONE OXIDOREDUCTASE SUBUNIT ND4L"/>
    <property type="match status" value="1"/>
</dbReference>
<dbReference type="Pfam" id="PF00420">
    <property type="entry name" value="Oxidored_q2"/>
    <property type="match status" value="1"/>
</dbReference>
<name>NUOK_LEPBP</name>
<accession>B0SP90</accession>
<feature type="chain" id="PRO_0000390108" description="NADH-quinone oxidoreductase subunit K">
    <location>
        <begin position="1"/>
        <end position="106"/>
    </location>
</feature>
<feature type="transmembrane region" description="Helical" evidence="1">
    <location>
        <begin position="10"/>
        <end position="30"/>
    </location>
</feature>
<feature type="transmembrane region" description="Helical" evidence="1">
    <location>
        <begin position="34"/>
        <end position="54"/>
    </location>
</feature>
<feature type="transmembrane region" description="Helical" evidence="1">
    <location>
        <begin position="67"/>
        <end position="87"/>
    </location>
</feature>
<sequence length="106" mass="11543">MNQIINGIPVTYILGLAGILFSIGVLGVLIRRNIVIIFMSVELILNSVNLVFVTFSKALSHINGETIVFFVMAIAAAEAAVGLALVIAIFRHKKSTNVDELQSMKW</sequence>
<gene>
    <name evidence="1" type="primary">nuoK</name>
    <name type="ordered locus">LEPBI_I1304</name>
</gene>